<comment type="function">
    <text evidence="2 3 4">Plays a role in the inhibition of host NF-kappa-B. This inhibition affects both the canonical and the non-canonical pathways. Blocks the induction of host IKK phosphorylation. May also influence the normal phosphorylation state of several tegument proteins including pp28 in virions. Also suppresses virus-induced ISGylation independent of its own ISGylation (PubMed:27564865).</text>
</comment>
<comment type="subunit">
    <text evidence="4">Interacts with UL25. Interacts with ISGylation machinery components ISG15, UBA7 and HERC5; these interactions inhibit global protein ISGylation.</text>
</comment>
<comment type="subcellular location">
    <subcellularLocation>
        <location evidence="1">Virion tegument</location>
    </subcellularLocation>
    <subcellularLocation>
        <location evidence="2">Host nucleus</location>
    </subcellularLocation>
    <text>Also found in dense bodies.</text>
</comment>
<comment type="alternative products">
    <event type="alternative initiation"/>
    <isoform>
        <id>F5HGG3-1</id>
        <name>27kDa</name>
        <sequence type="displayed"/>
    </isoform>
    <isoform>
        <id>F5HGG3-2</id>
        <name>21kDa</name>
        <sequence type="described" ref="VSP_043922"/>
    </isoform>
</comment>
<comment type="PTM">
    <text evidence="4">ISGylated; ISGylation regulates UL26 stability and inhibits its activities to suppress NF-kappa-B signaling.</text>
</comment>
<comment type="similarity">
    <text evidence="5">Belongs to the herpesviridae US22 family.</text>
</comment>
<proteinExistence type="evidence at protein level"/>
<organismHost>
    <name type="scientific">Homo sapiens</name>
    <name type="common">Human</name>
    <dbReference type="NCBI Taxonomy" id="9606"/>
</organismHost>
<reference key="1">
    <citation type="journal article" date="2004" name="J. Gen. Virol.">
        <title>Genetic content of wild-type human cytomegalovirus.</title>
        <authorList>
            <person name="Dolan A."/>
            <person name="Cunningham C."/>
            <person name="Hector R.D."/>
            <person name="Hassan-Walker A.F."/>
            <person name="Lee L."/>
            <person name="Addison C."/>
            <person name="Dargan D.J."/>
            <person name="McGeoch D.J."/>
            <person name="Gatherer D."/>
            <person name="Emery V.C."/>
            <person name="Griffiths P.D."/>
            <person name="Sinzger C."/>
            <person name="McSharry B.P."/>
            <person name="Wilkinson G.W.G."/>
            <person name="Davison A.J."/>
        </authorList>
    </citation>
    <scope>NUCLEOTIDE SEQUENCE [LARGE SCALE GENOMIC DNA]</scope>
</reference>
<reference key="2">
    <citation type="journal article" date="2006" name="J. Virol.">
        <title>UL26-deficient human cytomegalovirus produces virions with hypophosphorylated pp28 tegument protein that is unstable within newly infected cells.</title>
        <authorList>
            <person name="Munger J."/>
            <person name="Yu D."/>
            <person name="Shenk T."/>
        </authorList>
    </citation>
    <scope>FUNCTION</scope>
    <scope>SUBCELLULAR LOCATION</scope>
</reference>
<reference key="3">
    <citation type="journal article" date="2014" name="J. Virol.">
        <title>The human cytomegalovirus UL26 protein antagonizes NF-kappaB activation.</title>
        <authorList>
            <person name="Mathers C."/>
            <person name="Schafer X."/>
            <person name="Martinez-Sobrido L."/>
            <person name="Munger J."/>
        </authorList>
    </citation>
    <scope>FUNCTION</scope>
</reference>
<reference key="4">
    <citation type="journal article" date="2016" name="PLoS Pathog.">
        <title>Consecutive Inhibition of ISG15 Expression and ISGylation by Cytomegalovirus Regulators.</title>
        <authorList>
            <person name="Kim Y.J."/>
            <person name="Kim E.T."/>
            <person name="Kim Y.E."/>
            <person name="Lee M.K."/>
            <person name="Kwon K.M."/>
            <person name="Kim K.I."/>
            <person name="Stamminger T."/>
            <person name="Ahn J.H."/>
        </authorList>
    </citation>
    <scope>FUNCTION</scope>
    <scope>ISGYLATION</scope>
    <scope>INTERACTION WITH HOST ISG15; UBA7 AND HECT5</scope>
</reference>
<reference key="5">
    <citation type="journal article" date="2018" name="J. Virol.">
        <title>The Abundant Tegument Protein pUL25 of Human Cytomegalovirus Prevents Proteasomal Degradation of pUL26 and Supports Its Suppression of ISGylation.</title>
        <authorList>
            <person name="Zimmermann C."/>
            <person name="Buescher N."/>
            <person name="Krauter S."/>
            <person name="Kraemer N."/>
            <person name="Wolfrum U."/>
            <person name="Sehn E."/>
            <person name="Tenzer S."/>
            <person name="Plachter B."/>
        </authorList>
    </citation>
    <scope>FUNCTION</scope>
    <scope>INTERACTION WITH UL25</scope>
</reference>
<gene>
    <name type="primary">UL26</name>
</gene>
<keyword id="KW-0010">Activator</keyword>
<keyword id="KW-0024">Alternative initiation</keyword>
<keyword id="KW-1048">Host nucleus</keyword>
<keyword id="KW-0945">Host-virus interaction</keyword>
<keyword id="KW-1185">Reference proteome</keyword>
<keyword id="KW-0832">Ubl conjugation</keyword>
<keyword id="KW-0946">Virion</keyword>
<keyword id="KW-0920">Virion tegument</keyword>
<feature type="chain" id="PRO_0000417843" description="Tegument protein UL26">
    <location>
        <begin position="1"/>
        <end position="222"/>
    </location>
</feature>
<feature type="splice variant" id="VSP_043922" description="In isoform 21kDa." evidence="5">
    <location>
        <begin position="1"/>
        <end position="34"/>
    </location>
</feature>
<evidence type="ECO:0000250" key="1">
    <source>
        <dbReference type="UniProtKB" id="P16762"/>
    </source>
</evidence>
<evidence type="ECO:0000269" key="2">
    <source>
    </source>
</evidence>
<evidence type="ECO:0000269" key="3">
    <source>
    </source>
</evidence>
<evidence type="ECO:0000269" key="4">
    <source>
    </source>
</evidence>
<evidence type="ECO:0000305" key="5"/>
<organism>
    <name type="scientific">Human cytomegalovirus (strain Merlin)</name>
    <name type="common">HHV-5</name>
    <name type="synonym">Human herpesvirus 5</name>
    <dbReference type="NCBI Taxonomy" id="295027"/>
    <lineage>
        <taxon>Viruses</taxon>
        <taxon>Duplodnaviria</taxon>
        <taxon>Heunggongvirae</taxon>
        <taxon>Peploviricota</taxon>
        <taxon>Herviviricetes</taxon>
        <taxon>Herpesvirales</taxon>
        <taxon>Orthoherpesviridae</taxon>
        <taxon>Betaherpesvirinae</taxon>
        <taxon>Cytomegalovirus</taxon>
        <taxon>Cytomegalovirus humanbeta5</taxon>
        <taxon>Human cytomegalovirus</taxon>
    </lineage>
</organism>
<name>UL26_HCMVM</name>
<accession>F5HGG3</accession>
<sequence length="222" mass="24867">MYAVFGLTRSEVTPHEAAAARYKHRGVIDRRGAAMTSRRAPDGGLNLDDFMRRQRGRHLDLPYPRGYTLFVCDVEETILTPRDVEYWKLLVVTQGQLRVIGTIGLANLFSWDRSVAGVAADGSVLCYEISRENFVVRAADSLPQLLERGLLHSYFEDVERAAQGRLRHGNRSGLRRDADGQVIRESACYVSRALLRHRVTPGKQEITDAMFEAGNVPSALLP</sequence>
<dbReference type="EMBL" id="AY446894">
    <property type="protein sequence ID" value="AAR31591.1"/>
    <property type="molecule type" value="Genomic_DNA"/>
</dbReference>
<dbReference type="RefSeq" id="YP_081485.1">
    <property type="nucleotide sequence ID" value="NC_006273.2"/>
</dbReference>
<dbReference type="DNASU" id="3077445"/>
<dbReference type="GeneID" id="3077445"/>
<dbReference type="KEGG" id="vg:3077445"/>
<dbReference type="Reactome" id="R-HSA-9609690">
    <property type="pathway name" value="HCMV Early Events"/>
</dbReference>
<dbReference type="Reactome" id="R-HSA-9610379">
    <property type="pathway name" value="HCMV Late Events"/>
</dbReference>
<dbReference type="Proteomes" id="UP000000938">
    <property type="component" value="Segment"/>
</dbReference>
<dbReference type="GO" id="GO:0042025">
    <property type="term" value="C:host cell nucleus"/>
    <property type="evidence" value="ECO:0007669"/>
    <property type="project" value="UniProtKB-SubCell"/>
</dbReference>
<dbReference type="GO" id="GO:0019033">
    <property type="term" value="C:viral tegument"/>
    <property type="evidence" value="ECO:0000304"/>
    <property type="project" value="Reactome"/>
</dbReference>
<dbReference type="InterPro" id="IPR003360">
    <property type="entry name" value="US22-like"/>
</dbReference>
<dbReference type="Pfam" id="PF02393">
    <property type="entry name" value="US22"/>
    <property type="match status" value="1"/>
</dbReference>
<protein>
    <recommendedName>
        <fullName>Tegument protein UL26</fullName>
    </recommendedName>
</protein>